<dbReference type="EC" id="5.6.1.7" evidence="1"/>
<dbReference type="EMBL" id="BA000039">
    <property type="protein sequence ID" value="BAC08964.1"/>
    <property type="molecule type" value="Genomic_DNA"/>
</dbReference>
<dbReference type="RefSeq" id="NP_682202.1">
    <property type="nucleotide sequence ID" value="NC_004113.1"/>
</dbReference>
<dbReference type="RefSeq" id="WP_011057252.1">
    <property type="nucleotide sequence ID" value="NC_004113.1"/>
</dbReference>
<dbReference type="SMR" id="P0A337"/>
<dbReference type="STRING" id="197221.gene:10748011"/>
<dbReference type="EnsemblBacteria" id="BAC08964">
    <property type="protein sequence ID" value="BAC08964"/>
    <property type="gene ID" value="BAC08964"/>
</dbReference>
<dbReference type="KEGG" id="tel:tlr1412"/>
<dbReference type="PATRIC" id="fig|197221.4.peg.1485"/>
<dbReference type="eggNOG" id="COG0459">
    <property type="taxonomic scope" value="Bacteria"/>
</dbReference>
<dbReference type="Proteomes" id="UP000000440">
    <property type="component" value="Chromosome"/>
</dbReference>
<dbReference type="GO" id="GO:0005737">
    <property type="term" value="C:cytoplasm"/>
    <property type="evidence" value="ECO:0007669"/>
    <property type="project" value="UniProtKB-SubCell"/>
</dbReference>
<dbReference type="GO" id="GO:0005524">
    <property type="term" value="F:ATP binding"/>
    <property type="evidence" value="ECO:0007669"/>
    <property type="project" value="UniProtKB-UniRule"/>
</dbReference>
<dbReference type="GO" id="GO:0140662">
    <property type="term" value="F:ATP-dependent protein folding chaperone"/>
    <property type="evidence" value="ECO:0007669"/>
    <property type="project" value="InterPro"/>
</dbReference>
<dbReference type="GO" id="GO:0016853">
    <property type="term" value="F:isomerase activity"/>
    <property type="evidence" value="ECO:0007669"/>
    <property type="project" value="UniProtKB-KW"/>
</dbReference>
<dbReference type="GO" id="GO:0051082">
    <property type="term" value="F:unfolded protein binding"/>
    <property type="evidence" value="ECO:0007669"/>
    <property type="project" value="UniProtKB-UniRule"/>
</dbReference>
<dbReference type="GO" id="GO:0042026">
    <property type="term" value="P:protein refolding"/>
    <property type="evidence" value="ECO:0007669"/>
    <property type="project" value="UniProtKB-UniRule"/>
</dbReference>
<dbReference type="CDD" id="cd03344">
    <property type="entry name" value="GroEL"/>
    <property type="match status" value="1"/>
</dbReference>
<dbReference type="FunFam" id="3.50.7.10:FF:000001">
    <property type="entry name" value="60 kDa chaperonin"/>
    <property type="match status" value="1"/>
</dbReference>
<dbReference type="Gene3D" id="3.50.7.10">
    <property type="entry name" value="GroEL"/>
    <property type="match status" value="1"/>
</dbReference>
<dbReference type="Gene3D" id="1.10.560.10">
    <property type="entry name" value="GroEL-like equatorial domain"/>
    <property type="match status" value="1"/>
</dbReference>
<dbReference type="Gene3D" id="3.30.260.10">
    <property type="entry name" value="TCP-1-like chaperonin intermediate domain"/>
    <property type="match status" value="1"/>
</dbReference>
<dbReference type="HAMAP" id="MF_00600">
    <property type="entry name" value="CH60"/>
    <property type="match status" value="1"/>
</dbReference>
<dbReference type="InterPro" id="IPR001844">
    <property type="entry name" value="Cpn60/GroEL"/>
</dbReference>
<dbReference type="InterPro" id="IPR002423">
    <property type="entry name" value="Cpn60/GroEL/TCP-1"/>
</dbReference>
<dbReference type="InterPro" id="IPR027409">
    <property type="entry name" value="GroEL-like_apical_dom_sf"/>
</dbReference>
<dbReference type="InterPro" id="IPR027413">
    <property type="entry name" value="GROEL-like_equatorial_sf"/>
</dbReference>
<dbReference type="InterPro" id="IPR027410">
    <property type="entry name" value="TCP-1-like_intermed_sf"/>
</dbReference>
<dbReference type="NCBIfam" id="TIGR02348">
    <property type="entry name" value="GroEL"/>
    <property type="match status" value="1"/>
</dbReference>
<dbReference type="NCBIfam" id="NF000592">
    <property type="entry name" value="PRK00013.1"/>
    <property type="match status" value="1"/>
</dbReference>
<dbReference type="NCBIfam" id="NF009487">
    <property type="entry name" value="PRK12849.1"/>
    <property type="match status" value="1"/>
</dbReference>
<dbReference type="NCBIfam" id="NF009488">
    <property type="entry name" value="PRK12850.1"/>
    <property type="match status" value="1"/>
</dbReference>
<dbReference type="NCBIfam" id="NF009489">
    <property type="entry name" value="PRK12851.1"/>
    <property type="match status" value="1"/>
</dbReference>
<dbReference type="PANTHER" id="PTHR45633">
    <property type="entry name" value="60 KDA HEAT SHOCK PROTEIN, MITOCHONDRIAL"/>
    <property type="match status" value="1"/>
</dbReference>
<dbReference type="Pfam" id="PF00118">
    <property type="entry name" value="Cpn60_TCP1"/>
    <property type="match status" value="1"/>
</dbReference>
<dbReference type="PRINTS" id="PR00298">
    <property type="entry name" value="CHAPERONIN60"/>
</dbReference>
<dbReference type="SUPFAM" id="SSF52029">
    <property type="entry name" value="GroEL apical domain-like"/>
    <property type="match status" value="1"/>
</dbReference>
<dbReference type="SUPFAM" id="SSF48592">
    <property type="entry name" value="GroEL equatorial domain-like"/>
    <property type="match status" value="1"/>
</dbReference>
<dbReference type="SUPFAM" id="SSF54849">
    <property type="entry name" value="GroEL-intermediate domain like"/>
    <property type="match status" value="1"/>
</dbReference>
<evidence type="ECO:0000255" key="1">
    <source>
        <dbReference type="HAMAP-Rule" id="MF_00600"/>
    </source>
</evidence>
<feature type="chain" id="PRO_0000063573" description="Chaperonin GroEL 2">
    <location>
        <begin position="1"/>
        <end position="543"/>
    </location>
</feature>
<feature type="binding site" evidence="1">
    <location>
        <begin position="29"/>
        <end position="32"/>
    </location>
    <ligand>
        <name>ATP</name>
        <dbReference type="ChEBI" id="CHEBI:30616"/>
    </ligand>
</feature>
<feature type="binding site" evidence="1">
    <location>
        <begin position="86"/>
        <end position="90"/>
    </location>
    <ligand>
        <name>ATP</name>
        <dbReference type="ChEBI" id="CHEBI:30616"/>
    </ligand>
</feature>
<feature type="binding site" evidence="1">
    <location>
        <position position="413"/>
    </location>
    <ligand>
        <name>ATP</name>
        <dbReference type="ChEBI" id="CHEBI:30616"/>
    </ligand>
</feature>
<feature type="binding site" evidence="1">
    <location>
        <begin position="478"/>
        <end position="480"/>
    </location>
    <ligand>
        <name>ATP</name>
        <dbReference type="ChEBI" id="CHEBI:30616"/>
    </ligand>
</feature>
<feature type="binding site" evidence="1">
    <location>
        <position position="494"/>
    </location>
    <ligand>
        <name>ATP</name>
        <dbReference type="ChEBI" id="CHEBI:30616"/>
    </ligand>
</feature>
<accession>P0A337</accession>
<accession>Q57002</accession>
<comment type="function">
    <text evidence="1">Together with its co-chaperonin GroES, plays an essential role in assisting protein folding. The GroEL-GroES system forms a nano-cage that allows encapsulation of the non-native substrate proteins and provides a physical environment optimized to promote and accelerate protein folding.</text>
</comment>
<comment type="catalytic activity">
    <reaction evidence="1">
        <text>ATP + H2O + a folded polypeptide = ADP + phosphate + an unfolded polypeptide.</text>
        <dbReference type="EC" id="5.6.1.7"/>
    </reaction>
</comment>
<comment type="subunit">
    <text evidence="1">Forms a cylinder of 14 subunits composed of two heptameric rings stacked back-to-back. Interacts with the co-chaperonin GroES.</text>
</comment>
<comment type="subcellular location">
    <subcellularLocation>
        <location evidence="1">Cytoplasm</location>
    </subcellularLocation>
</comment>
<comment type="similarity">
    <text evidence="1">Belongs to the chaperonin (HSP60) family.</text>
</comment>
<name>CH602_THEVB</name>
<keyword id="KW-0067">ATP-binding</keyword>
<keyword id="KW-0143">Chaperone</keyword>
<keyword id="KW-0963">Cytoplasm</keyword>
<keyword id="KW-0413">Isomerase</keyword>
<keyword id="KW-0547">Nucleotide-binding</keyword>
<keyword id="KW-1185">Reference proteome</keyword>
<sequence length="543" mass="57103">MAKLVAFHEESRRSLERGINALADAVKITLGPKGRNVVLEKKYGAPQIVNDGVTIAKEIELEDAYENTGAQLMREVAAKTNDVVGDGTTTATVLAQALIREGLKNVAAGTNPIALKRGMEKAIKTIVDGIAEVAKPVEGDMIAQVATVSAGNDPEVGAMISEAMAKVGKDGVITIEESKSLQTEMEIVEGMQFDRGYISPYFVTDPERMIVQLNNAYLLLTDKKITSIQDLIPTLERVARSGRPLVIIAEDVEGEALATLVVNKLRGVLNVVAVKAPAFGERRKAMLQDIAILTGGQVISEEVGLTLEDVELTMLGEASSVTVTKDTTILVSEKGNKADIQKRVEQLKQQLAETDSEYDKEKLQERIAKLVGGVAVIKVGAATETELKDRKLRLEDALNATKAAVAEGIVPGGGVTLLHLASRIDALLPSLSPEEQTGARIVASALAAPVAQIADNAGAEGAVVVENVRAGDFNYGFNAATGAYEDLVSAGIIDPAKVVRSALQNAGSIAGMVLTTEALVVEKPEPKPAAPANGGMGGMGGMM</sequence>
<organism>
    <name type="scientific">Thermosynechococcus vestitus (strain NIES-2133 / IAM M-273 / BP-1)</name>
    <dbReference type="NCBI Taxonomy" id="197221"/>
    <lineage>
        <taxon>Bacteria</taxon>
        <taxon>Bacillati</taxon>
        <taxon>Cyanobacteriota</taxon>
        <taxon>Cyanophyceae</taxon>
        <taxon>Acaryochloridales</taxon>
        <taxon>Thermosynechococcaceae</taxon>
        <taxon>Thermosynechococcus</taxon>
    </lineage>
</organism>
<gene>
    <name evidence="1" type="primary">groEL2</name>
    <name evidence="1" type="synonym">groL2</name>
    <name type="ordered locus">tlr1412</name>
</gene>
<proteinExistence type="inferred from homology"/>
<reference key="1">
    <citation type="journal article" date="2002" name="DNA Res.">
        <title>Complete genome structure of the thermophilic cyanobacterium Thermosynechococcus elongatus BP-1.</title>
        <authorList>
            <person name="Nakamura Y."/>
            <person name="Kaneko T."/>
            <person name="Sato S."/>
            <person name="Ikeuchi M."/>
            <person name="Katoh H."/>
            <person name="Sasamoto S."/>
            <person name="Watanabe A."/>
            <person name="Iriguchi M."/>
            <person name="Kawashima K."/>
            <person name="Kimura T."/>
            <person name="Kishida Y."/>
            <person name="Kiyokawa C."/>
            <person name="Kohara M."/>
            <person name="Matsumoto M."/>
            <person name="Matsuno A."/>
            <person name="Nakazaki N."/>
            <person name="Shimpo S."/>
            <person name="Sugimoto M."/>
            <person name="Takeuchi C."/>
            <person name="Yamada M."/>
            <person name="Tabata S."/>
        </authorList>
    </citation>
    <scope>NUCLEOTIDE SEQUENCE [LARGE SCALE GENOMIC DNA]</scope>
    <source>
        <strain>NIES-2133 / IAM M-273 / BP-1</strain>
    </source>
</reference>
<protein>
    <recommendedName>
        <fullName evidence="1">Chaperonin GroEL 2</fullName>
        <ecNumber evidence="1">5.6.1.7</ecNumber>
    </recommendedName>
    <alternativeName>
        <fullName evidence="1">60 kDa chaperonin 2</fullName>
    </alternativeName>
    <alternativeName>
        <fullName evidence="1">Chaperonin-60 2</fullName>
        <shortName evidence="1">Cpn60 2</shortName>
    </alternativeName>
</protein>